<protein>
    <recommendedName>
        <fullName>Protein LDB17</fullName>
    </recommendedName>
</protein>
<dbReference type="EMBL" id="AE016817">
    <property type="protein sequence ID" value="AAS51995.2"/>
    <property type="molecule type" value="Genomic_DNA"/>
</dbReference>
<dbReference type="RefSeq" id="NP_984171.2">
    <property type="nucleotide sequence ID" value="NM_209524.2"/>
</dbReference>
<dbReference type="FunCoup" id="Q75A44">
    <property type="interactions" value="16"/>
</dbReference>
<dbReference type="STRING" id="284811.Q75A44"/>
<dbReference type="EnsemblFungi" id="AAS51995">
    <property type="protein sequence ID" value="AAS51995"/>
    <property type="gene ID" value="AGOS_ADR075W"/>
</dbReference>
<dbReference type="GeneID" id="4620320"/>
<dbReference type="KEGG" id="ago:AGOS_ADR075W"/>
<dbReference type="eggNOG" id="KOG4035">
    <property type="taxonomic scope" value="Eukaryota"/>
</dbReference>
<dbReference type="HOGENOM" id="CLU_017272_2_1_1"/>
<dbReference type="InParanoid" id="Q75A44"/>
<dbReference type="OMA" id="ISLRHTY"/>
<dbReference type="OrthoDB" id="445362at2759"/>
<dbReference type="Proteomes" id="UP000000591">
    <property type="component" value="Chromosome IV"/>
</dbReference>
<dbReference type="GO" id="GO:0030479">
    <property type="term" value="C:actin cortical patch"/>
    <property type="evidence" value="ECO:0000318"/>
    <property type="project" value="GO_Central"/>
</dbReference>
<dbReference type="GO" id="GO:0071933">
    <property type="term" value="F:Arp2/3 complex binding"/>
    <property type="evidence" value="ECO:0000318"/>
    <property type="project" value="GO_Central"/>
</dbReference>
<dbReference type="GO" id="GO:0000147">
    <property type="term" value="P:actin cortical patch assembly"/>
    <property type="evidence" value="ECO:0000318"/>
    <property type="project" value="GO_Central"/>
</dbReference>
<dbReference type="GO" id="GO:0051666">
    <property type="term" value="P:actin cortical patch localization"/>
    <property type="evidence" value="ECO:0000318"/>
    <property type="project" value="GO_Central"/>
</dbReference>
<dbReference type="GO" id="GO:0006897">
    <property type="term" value="P:endocytosis"/>
    <property type="evidence" value="ECO:0000318"/>
    <property type="project" value="GO_Central"/>
</dbReference>
<dbReference type="InterPro" id="IPR030125">
    <property type="entry name" value="SPIN90/Ldb17"/>
</dbReference>
<dbReference type="InterPro" id="IPR018556">
    <property type="entry name" value="SPIN90/Ldb17_LRD"/>
</dbReference>
<dbReference type="PANTHER" id="PTHR13357:SF1">
    <property type="entry name" value="NCK-INTERACTING PROTEIN WITH SH3 DOMAIN"/>
    <property type="match status" value="1"/>
</dbReference>
<dbReference type="PANTHER" id="PTHR13357">
    <property type="entry name" value="SH3 ADAPTER PROTEIN SPIN90 NCK INTERACTING PROTEIN WITH SH3 DOMAIN"/>
    <property type="match status" value="1"/>
</dbReference>
<dbReference type="Pfam" id="PF09431">
    <property type="entry name" value="SPIN90_LRD"/>
    <property type="match status" value="1"/>
</dbReference>
<keyword id="KW-0963">Cytoplasm</keyword>
<keyword id="KW-1185">Reference proteome</keyword>
<feature type="chain" id="PRO_0000240384" description="Protein LDB17">
    <location>
        <begin position="1"/>
        <end position="457"/>
    </location>
</feature>
<feature type="region of interest" description="Disordered" evidence="2">
    <location>
        <begin position="401"/>
        <end position="457"/>
    </location>
</feature>
<feature type="compositionally biased region" description="Basic and acidic residues" evidence="2">
    <location>
        <begin position="416"/>
        <end position="427"/>
    </location>
</feature>
<feature type="compositionally biased region" description="Pro residues" evidence="2">
    <location>
        <begin position="446"/>
        <end position="457"/>
    </location>
</feature>
<evidence type="ECO:0000250" key="1"/>
<evidence type="ECO:0000256" key="2">
    <source>
        <dbReference type="SAM" id="MobiDB-lite"/>
    </source>
</evidence>
<evidence type="ECO:0000305" key="3"/>
<reference key="1">
    <citation type="journal article" date="2004" name="Science">
        <title>The Ashbya gossypii genome as a tool for mapping the ancient Saccharomyces cerevisiae genome.</title>
        <authorList>
            <person name="Dietrich F.S."/>
            <person name="Voegeli S."/>
            <person name="Brachat S."/>
            <person name="Lerch A."/>
            <person name="Gates K."/>
            <person name="Steiner S."/>
            <person name="Mohr C."/>
            <person name="Poehlmann R."/>
            <person name="Luedi P."/>
            <person name="Choi S."/>
            <person name="Wing R.A."/>
            <person name="Flavier A."/>
            <person name="Gaffney T.D."/>
            <person name="Philippsen P."/>
        </authorList>
    </citation>
    <scope>NUCLEOTIDE SEQUENCE [LARGE SCALE GENOMIC DNA]</scope>
    <source>
        <strain>ATCC 10895 / CBS 109.51 / FGSC 9923 / NRRL Y-1056</strain>
    </source>
</reference>
<reference key="2">
    <citation type="journal article" date="2013" name="G3 (Bethesda)">
        <title>Genomes of Ashbya fungi isolated from insects reveal four mating-type loci, numerous translocations, lack of transposons, and distinct gene duplications.</title>
        <authorList>
            <person name="Dietrich F.S."/>
            <person name="Voegeli S."/>
            <person name="Kuo S."/>
            <person name="Philippsen P."/>
        </authorList>
    </citation>
    <scope>GENOME REANNOTATION</scope>
    <scope>SEQUENCE REVISION TO C-TERMINUS</scope>
    <source>
        <strain>ATCC 10895 / CBS 109.51 / FGSC 9923 / NRRL Y-1056</strain>
    </source>
</reference>
<organism>
    <name type="scientific">Eremothecium gossypii (strain ATCC 10895 / CBS 109.51 / FGSC 9923 / NRRL Y-1056)</name>
    <name type="common">Yeast</name>
    <name type="synonym">Ashbya gossypii</name>
    <dbReference type="NCBI Taxonomy" id="284811"/>
    <lineage>
        <taxon>Eukaryota</taxon>
        <taxon>Fungi</taxon>
        <taxon>Dikarya</taxon>
        <taxon>Ascomycota</taxon>
        <taxon>Saccharomycotina</taxon>
        <taxon>Saccharomycetes</taxon>
        <taxon>Saccharomycetales</taxon>
        <taxon>Saccharomycetaceae</taxon>
        <taxon>Eremothecium</taxon>
    </lineage>
</organism>
<comment type="function">
    <text evidence="1">May be involved in protein-linked oligosaccharide phosphorylation.</text>
</comment>
<comment type="subcellular location">
    <subcellularLocation>
        <location evidence="1">Cytoplasm</location>
    </subcellularLocation>
</comment>
<comment type="similarity">
    <text evidence="3">Belongs to the LDB17 family.</text>
</comment>
<sequence>MALKPPYSPESGGASRSRTQTETVHFWEYLESLLDAADCTSEAQVNSALVAYVKTASERYGEYLVEDRDFYRVALLLLRAPLYERNKSFCISKMLSLLSIDLLEMSMKFVISYILLCECKADSSSLDHVLDYQGFTVIYNKLYEHFAYLHRYSDDEETTFEANITELDEEINEELRKISTVLLDLLFQILKYSKCELANLQRVDDFFVYYMMVSLRSDTVEDMYNNAKFRLLLALNEQYMISNHKAGLENKVYAYLMNHTASKQFVELLLLQFNRTVDKSLQIMMCKIIYLILTSRDEIAMDYFYLNDLHVVTDVLIRNLTNISEDEEVLRNTFLRILDLILRKTEWTQSHYREQELLELLEYLCSVDNLCSSGNVKSEHMSTTKLAFKCRQAIRQLKVEQKKSRDAAAAPAPRPKTPEPRFERTDSHMSVPMDKITRAIGRSPFASPPPPPPSRRV</sequence>
<accession>Q75A44</accession>
<proteinExistence type="inferred from homology"/>
<name>LDB17_EREGS</name>
<gene>
    <name type="primary">LDB17</name>
    <name type="ordered locus">ADR075W</name>
</gene>